<organism>
    <name type="scientific">Bacillus subtilis (strain 168)</name>
    <dbReference type="NCBI Taxonomy" id="224308"/>
    <lineage>
        <taxon>Bacteria</taxon>
        <taxon>Bacillati</taxon>
        <taxon>Bacillota</taxon>
        <taxon>Bacilli</taxon>
        <taxon>Bacillales</taxon>
        <taxon>Bacillaceae</taxon>
        <taxon>Bacillus</taxon>
    </lineage>
</organism>
<reference key="1">
    <citation type="submission" date="1997-08" db="EMBL/GenBank/DDBJ databases">
        <title>Bacillus subtilis chromosomal region downstream nprE.</title>
        <authorList>
            <person name="Bertero M."/>
            <person name="Presecan E."/>
            <person name="Glaser P."/>
            <person name="Richou A."/>
            <person name="Danchin A."/>
        </authorList>
    </citation>
    <scope>NUCLEOTIDE SEQUENCE [GENOMIC DNA]</scope>
    <source>
        <strain>168</strain>
    </source>
</reference>
<reference key="2">
    <citation type="journal article" date="1997" name="Nature">
        <title>The complete genome sequence of the Gram-positive bacterium Bacillus subtilis.</title>
        <authorList>
            <person name="Kunst F."/>
            <person name="Ogasawara N."/>
            <person name="Moszer I."/>
            <person name="Albertini A.M."/>
            <person name="Alloni G."/>
            <person name="Azevedo V."/>
            <person name="Bertero M.G."/>
            <person name="Bessieres P."/>
            <person name="Bolotin A."/>
            <person name="Borchert S."/>
            <person name="Borriss R."/>
            <person name="Boursier L."/>
            <person name="Brans A."/>
            <person name="Braun M."/>
            <person name="Brignell S.C."/>
            <person name="Bron S."/>
            <person name="Brouillet S."/>
            <person name="Bruschi C.V."/>
            <person name="Caldwell B."/>
            <person name="Capuano V."/>
            <person name="Carter N.M."/>
            <person name="Choi S.-K."/>
            <person name="Codani J.-J."/>
            <person name="Connerton I.F."/>
            <person name="Cummings N.J."/>
            <person name="Daniel R.A."/>
            <person name="Denizot F."/>
            <person name="Devine K.M."/>
            <person name="Duesterhoeft A."/>
            <person name="Ehrlich S.D."/>
            <person name="Emmerson P.T."/>
            <person name="Entian K.-D."/>
            <person name="Errington J."/>
            <person name="Fabret C."/>
            <person name="Ferrari E."/>
            <person name="Foulger D."/>
            <person name="Fritz C."/>
            <person name="Fujita M."/>
            <person name="Fujita Y."/>
            <person name="Fuma S."/>
            <person name="Galizzi A."/>
            <person name="Galleron N."/>
            <person name="Ghim S.-Y."/>
            <person name="Glaser P."/>
            <person name="Goffeau A."/>
            <person name="Golightly E.J."/>
            <person name="Grandi G."/>
            <person name="Guiseppi G."/>
            <person name="Guy B.J."/>
            <person name="Haga K."/>
            <person name="Haiech J."/>
            <person name="Harwood C.R."/>
            <person name="Henaut A."/>
            <person name="Hilbert H."/>
            <person name="Holsappel S."/>
            <person name="Hosono S."/>
            <person name="Hullo M.-F."/>
            <person name="Itaya M."/>
            <person name="Jones L.-M."/>
            <person name="Joris B."/>
            <person name="Karamata D."/>
            <person name="Kasahara Y."/>
            <person name="Klaerr-Blanchard M."/>
            <person name="Klein C."/>
            <person name="Kobayashi Y."/>
            <person name="Koetter P."/>
            <person name="Koningstein G."/>
            <person name="Krogh S."/>
            <person name="Kumano M."/>
            <person name="Kurita K."/>
            <person name="Lapidus A."/>
            <person name="Lardinois S."/>
            <person name="Lauber J."/>
            <person name="Lazarevic V."/>
            <person name="Lee S.-M."/>
            <person name="Levine A."/>
            <person name="Liu H."/>
            <person name="Masuda S."/>
            <person name="Mauel C."/>
            <person name="Medigue C."/>
            <person name="Medina N."/>
            <person name="Mellado R.P."/>
            <person name="Mizuno M."/>
            <person name="Moestl D."/>
            <person name="Nakai S."/>
            <person name="Noback M."/>
            <person name="Noone D."/>
            <person name="O'Reilly M."/>
            <person name="Ogawa K."/>
            <person name="Ogiwara A."/>
            <person name="Oudega B."/>
            <person name="Park S.-H."/>
            <person name="Parro V."/>
            <person name="Pohl T.M."/>
            <person name="Portetelle D."/>
            <person name="Porwollik S."/>
            <person name="Prescott A.M."/>
            <person name="Presecan E."/>
            <person name="Pujic P."/>
            <person name="Purnelle B."/>
            <person name="Rapoport G."/>
            <person name="Rey M."/>
            <person name="Reynolds S."/>
            <person name="Rieger M."/>
            <person name="Rivolta C."/>
            <person name="Rocha E."/>
            <person name="Roche B."/>
            <person name="Rose M."/>
            <person name="Sadaie Y."/>
            <person name="Sato T."/>
            <person name="Scanlan E."/>
            <person name="Schleich S."/>
            <person name="Schroeter R."/>
            <person name="Scoffone F."/>
            <person name="Sekiguchi J."/>
            <person name="Sekowska A."/>
            <person name="Seror S.J."/>
            <person name="Serror P."/>
            <person name="Shin B.-S."/>
            <person name="Soldo B."/>
            <person name="Sorokin A."/>
            <person name="Tacconi E."/>
            <person name="Takagi T."/>
            <person name="Takahashi H."/>
            <person name="Takemaru K."/>
            <person name="Takeuchi M."/>
            <person name="Tamakoshi A."/>
            <person name="Tanaka T."/>
            <person name="Terpstra P."/>
            <person name="Tognoni A."/>
            <person name="Tosato V."/>
            <person name="Uchiyama S."/>
            <person name="Vandenbol M."/>
            <person name="Vannier F."/>
            <person name="Vassarotti A."/>
            <person name="Viari A."/>
            <person name="Wambutt R."/>
            <person name="Wedler E."/>
            <person name="Wedler H."/>
            <person name="Weitzenegger T."/>
            <person name="Winters P."/>
            <person name="Wipat A."/>
            <person name="Yamamoto H."/>
            <person name="Yamane K."/>
            <person name="Yasumoto K."/>
            <person name="Yata K."/>
            <person name="Yoshida K."/>
            <person name="Yoshikawa H.-F."/>
            <person name="Zumstein E."/>
            <person name="Yoshikawa H."/>
            <person name="Danchin A."/>
        </authorList>
    </citation>
    <scope>NUCLEOTIDE SEQUENCE [LARGE SCALE GENOMIC DNA]</scope>
    <source>
        <strain>168</strain>
    </source>
</reference>
<reference key="3">
    <citation type="journal article" date="2009" name="Microbiology">
        <title>From a consortium sequence to a unified sequence: the Bacillus subtilis 168 reference genome a decade later.</title>
        <authorList>
            <person name="Barbe V."/>
            <person name="Cruveiller S."/>
            <person name="Kunst F."/>
            <person name="Lenoble P."/>
            <person name="Meurice G."/>
            <person name="Sekowska A."/>
            <person name="Vallenet D."/>
            <person name="Wang T."/>
            <person name="Moszer I."/>
            <person name="Medigue C."/>
            <person name="Danchin A."/>
        </authorList>
    </citation>
    <scope>SEQUENCE REVISION TO 142</scope>
</reference>
<accession>O34468</accession>
<accession>Q797S7</accession>
<name>YLBP_BACSU</name>
<keyword id="KW-0002">3D-structure</keyword>
<keyword id="KW-0012">Acyltransferase</keyword>
<keyword id="KW-1185">Reference proteome</keyword>
<keyword id="KW-0808">Transferase</keyword>
<gene>
    <name type="primary">ylbP</name>
    <name type="ordered locus">BSU15100</name>
</gene>
<protein>
    <recommendedName>
        <fullName>Uncharacterized N-acetyltransferase YlbP</fullName>
        <ecNumber>2.3.1.-</ecNumber>
    </recommendedName>
</protein>
<dbReference type="EC" id="2.3.1.-"/>
<dbReference type="EMBL" id="Z98682">
    <property type="protein sequence ID" value="CAB11363.1"/>
    <property type="molecule type" value="Genomic_DNA"/>
</dbReference>
<dbReference type="EMBL" id="AL009126">
    <property type="protein sequence ID" value="CAB13383.2"/>
    <property type="molecule type" value="Genomic_DNA"/>
</dbReference>
<dbReference type="PIR" id="E69875">
    <property type="entry name" value="E69875"/>
</dbReference>
<dbReference type="RefSeq" id="NP_389393.2">
    <property type="nucleotide sequence ID" value="NC_000964.3"/>
</dbReference>
<dbReference type="RefSeq" id="WP_003244940.1">
    <property type="nucleotide sequence ID" value="NZ_OZ025638.1"/>
</dbReference>
<dbReference type="PDB" id="2PR1">
    <property type="method" value="X-ray"/>
    <property type="resolution" value="3.20 A"/>
    <property type="chains" value="A/B=1-160"/>
</dbReference>
<dbReference type="PDBsum" id="2PR1"/>
<dbReference type="SMR" id="O34468"/>
<dbReference type="FunCoup" id="O34468">
    <property type="interactions" value="151"/>
</dbReference>
<dbReference type="IntAct" id="O34468">
    <property type="interactions" value="1"/>
</dbReference>
<dbReference type="STRING" id="224308.BSU15100"/>
<dbReference type="PaxDb" id="224308-BSU15100"/>
<dbReference type="EnsemblBacteria" id="CAB13383">
    <property type="protein sequence ID" value="CAB13383"/>
    <property type="gene ID" value="BSU_15100"/>
</dbReference>
<dbReference type="GeneID" id="939853"/>
<dbReference type="KEGG" id="bsu:BSU15100"/>
<dbReference type="PATRIC" id="fig|224308.179.peg.1646"/>
<dbReference type="eggNOG" id="COG0454">
    <property type="taxonomic scope" value="Bacteria"/>
</dbReference>
<dbReference type="InParanoid" id="O34468"/>
<dbReference type="OrthoDB" id="2242710at2"/>
<dbReference type="PhylomeDB" id="O34468"/>
<dbReference type="BioCyc" id="BSUB:BSU15100-MONOMER"/>
<dbReference type="EvolutionaryTrace" id="O34468"/>
<dbReference type="Proteomes" id="UP000001570">
    <property type="component" value="Chromosome"/>
</dbReference>
<dbReference type="GO" id="GO:0016747">
    <property type="term" value="F:acyltransferase activity, transferring groups other than amino-acyl groups"/>
    <property type="evidence" value="ECO:0007669"/>
    <property type="project" value="UniProtKB-UniRule"/>
</dbReference>
<dbReference type="CDD" id="cd04301">
    <property type="entry name" value="NAT_SF"/>
    <property type="match status" value="1"/>
</dbReference>
<dbReference type="Gene3D" id="3.40.630.30">
    <property type="match status" value="1"/>
</dbReference>
<dbReference type="HAMAP" id="MF_00824">
    <property type="entry name" value="Acetyltransf_YlbP"/>
    <property type="match status" value="1"/>
</dbReference>
<dbReference type="InterPro" id="IPR016181">
    <property type="entry name" value="Acyl_CoA_acyltransferase"/>
</dbReference>
<dbReference type="InterPro" id="IPR000182">
    <property type="entry name" value="GNAT_dom"/>
</dbReference>
<dbReference type="InterPro" id="IPR017274">
    <property type="entry name" value="YlbP"/>
</dbReference>
<dbReference type="NCBIfam" id="NF010241">
    <property type="entry name" value="PRK13688.1"/>
    <property type="match status" value="1"/>
</dbReference>
<dbReference type="Pfam" id="PF00583">
    <property type="entry name" value="Acetyltransf_1"/>
    <property type="match status" value="1"/>
</dbReference>
<dbReference type="PIRSF" id="PIRSF037732">
    <property type="entry name" value="YlbP_prd"/>
    <property type="match status" value="1"/>
</dbReference>
<dbReference type="SUPFAM" id="SSF55729">
    <property type="entry name" value="Acyl-CoA N-acyltransferases (Nat)"/>
    <property type="match status" value="1"/>
</dbReference>
<dbReference type="PROSITE" id="PS51186">
    <property type="entry name" value="GNAT"/>
    <property type="match status" value="1"/>
</dbReference>
<evidence type="ECO:0000305" key="1"/>
<evidence type="ECO:0007829" key="2">
    <source>
        <dbReference type="PDB" id="2PR1"/>
    </source>
</evidence>
<proteinExistence type="evidence at protein level"/>
<feature type="chain" id="PRO_0000232478" description="Uncharacterized N-acetyltransferase YlbP">
    <location>
        <begin position="1"/>
        <end position="160"/>
    </location>
</feature>
<feature type="domain" description="N-acetyltransferase">
    <location>
        <begin position="7"/>
        <end position="151"/>
    </location>
</feature>
<feature type="sequence conflict" description="In Ref. 1; CAB11363." evidence="1" ref="1">
    <original>N</original>
    <variation>D</variation>
    <location>
        <position position="142"/>
    </location>
</feature>
<feature type="strand" evidence="2">
    <location>
        <begin position="5"/>
        <end position="10"/>
    </location>
</feature>
<feature type="helix" evidence="2">
    <location>
        <begin position="11"/>
        <end position="17"/>
    </location>
</feature>
<feature type="strand" evidence="2">
    <location>
        <begin position="20"/>
        <end position="22"/>
    </location>
</feature>
<feature type="helix" evidence="2">
    <location>
        <begin position="25"/>
        <end position="36"/>
    </location>
</feature>
<feature type="helix" evidence="2">
    <location>
        <begin position="38"/>
        <end position="40"/>
    </location>
</feature>
<feature type="strand" evidence="2">
    <location>
        <begin position="43"/>
        <end position="52"/>
    </location>
</feature>
<feature type="strand" evidence="2">
    <location>
        <begin position="55"/>
        <end position="65"/>
    </location>
</feature>
<feature type="helix" evidence="2">
    <location>
        <begin position="74"/>
        <end position="76"/>
    </location>
</feature>
<feature type="strand" evidence="2">
    <location>
        <begin position="79"/>
        <end position="87"/>
    </location>
</feature>
<feature type="helix" evidence="2">
    <location>
        <begin position="96"/>
        <end position="105"/>
    </location>
</feature>
<feature type="strand" evidence="2">
    <location>
        <begin position="111"/>
        <end position="113"/>
    </location>
</feature>
<feature type="helix" evidence="2">
    <location>
        <begin position="117"/>
        <end position="119"/>
    </location>
</feature>
<feature type="helix" evidence="2">
    <location>
        <begin position="120"/>
        <end position="125"/>
    </location>
</feature>
<feature type="helix" evidence="2">
    <location>
        <begin position="135"/>
        <end position="138"/>
    </location>
</feature>
<feature type="strand" evidence="2">
    <location>
        <begin position="144"/>
        <end position="146"/>
    </location>
</feature>
<feature type="strand" evidence="2">
    <location>
        <begin position="148"/>
        <end position="150"/>
    </location>
</feature>
<sequence length="160" mass="19039">MTKVERLLINYKTLEEFKKFKEYGIQELSMLEELQDNIIENDSTSPFYGIYFGDKLVARMSLYQVNGKSNPYFDNRQDYLELWKLEVLPGYQNRGYGRALVEFAKSFKMPIRTNPRMKSAEFWNKMNFKTVKYDMARDKGENPLIWHPDMDREMTPGESA</sequence>